<gene>
    <name type="primary">MT-ND6</name>
    <name type="synonym">MTND6</name>
    <name type="synonym">NADH6</name>
    <name type="synonym">ND6</name>
</gene>
<reference key="1">
    <citation type="journal article" date="1992" name="Nucleic Acids Res.">
        <title>The complete nucleotide sequence of the Crossostoma lacustre mitochondrial genome: conservation and variations among vertebrates.</title>
        <authorList>
            <person name="Tzeng C.-S."/>
            <person name="Hui C.-F."/>
            <person name="Shen S.-C."/>
            <person name="Huang P.C."/>
        </authorList>
    </citation>
    <scope>NUCLEOTIDE SEQUENCE [GENOMIC DNA]</scope>
</reference>
<name>NU6M_FORLA</name>
<dbReference type="EC" id="7.1.1.2"/>
<dbReference type="EMBL" id="M91245">
    <property type="protein sequence ID" value="AAB96822.1"/>
    <property type="molecule type" value="Genomic_DNA"/>
</dbReference>
<dbReference type="PIR" id="S35472">
    <property type="entry name" value="S35472"/>
</dbReference>
<dbReference type="RefSeq" id="NP_008314.1">
    <property type="nucleotide sequence ID" value="NC_001727.1"/>
</dbReference>
<dbReference type="SMR" id="P34196"/>
<dbReference type="GeneID" id="807989"/>
<dbReference type="CTD" id="4541"/>
<dbReference type="GO" id="GO:0031966">
    <property type="term" value="C:mitochondrial membrane"/>
    <property type="evidence" value="ECO:0007669"/>
    <property type="project" value="UniProtKB-SubCell"/>
</dbReference>
<dbReference type="GO" id="GO:0008137">
    <property type="term" value="F:NADH dehydrogenase (ubiquinone) activity"/>
    <property type="evidence" value="ECO:0007669"/>
    <property type="project" value="UniProtKB-EC"/>
</dbReference>
<dbReference type="InterPro" id="IPR050269">
    <property type="entry name" value="ComplexI_Subunit6"/>
</dbReference>
<dbReference type="InterPro" id="IPR001457">
    <property type="entry name" value="NADH_UbQ/plastoQ_OxRdtase_su6"/>
</dbReference>
<dbReference type="PANTHER" id="PTHR11435">
    <property type="entry name" value="NADH UBIQUINONE OXIDOREDUCTASE SUBUNIT ND6"/>
    <property type="match status" value="1"/>
</dbReference>
<dbReference type="PANTHER" id="PTHR11435:SF1">
    <property type="entry name" value="NADH-UBIQUINONE OXIDOREDUCTASE CHAIN 6"/>
    <property type="match status" value="1"/>
</dbReference>
<dbReference type="Pfam" id="PF00499">
    <property type="entry name" value="Oxidored_q3"/>
    <property type="match status" value="1"/>
</dbReference>
<feature type="chain" id="PRO_0000118270" description="NADH-ubiquinone oxidoreductase chain 6">
    <location>
        <begin position="1"/>
        <end position="173"/>
    </location>
</feature>
<feature type="transmembrane region" description="Helical" evidence="2">
    <location>
        <begin position="1"/>
        <end position="21"/>
    </location>
</feature>
<feature type="transmembrane region" description="Helical" evidence="2">
    <location>
        <begin position="24"/>
        <end position="44"/>
    </location>
</feature>
<feature type="transmembrane region" description="Helical" evidence="2">
    <location>
        <begin position="53"/>
        <end position="73"/>
    </location>
</feature>
<feature type="transmembrane region" description="Helical" evidence="2">
    <location>
        <begin position="86"/>
        <end position="106"/>
    </location>
</feature>
<feature type="transmembrane region" description="Helical" evidence="2">
    <location>
        <begin position="139"/>
        <end position="159"/>
    </location>
</feature>
<keyword id="KW-0249">Electron transport</keyword>
<keyword id="KW-0472">Membrane</keyword>
<keyword id="KW-0496">Mitochondrion</keyword>
<keyword id="KW-0520">NAD</keyword>
<keyword id="KW-0679">Respiratory chain</keyword>
<keyword id="KW-1278">Translocase</keyword>
<keyword id="KW-0812">Transmembrane</keyword>
<keyword id="KW-1133">Transmembrane helix</keyword>
<keyword id="KW-0813">Transport</keyword>
<keyword id="KW-0830">Ubiquinone</keyword>
<accession>P34196</accession>
<organism>
    <name type="scientific">Formosania lacustris</name>
    <name type="common">Oriental stream loach</name>
    <name type="synonym">Crossostoma lacustre</name>
    <dbReference type="NCBI Taxonomy" id="7980"/>
    <lineage>
        <taxon>Eukaryota</taxon>
        <taxon>Metazoa</taxon>
        <taxon>Chordata</taxon>
        <taxon>Craniata</taxon>
        <taxon>Vertebrata</taxon>
        <taxon>Euteleostomi</taxon>
        <taxon>Actinopterygii</taxon>
        <taxon>Neopterygii</taxon>
        <taxon>Teleostei</taxon>
        <taxon>Ostariophysi</taxon>
        <taxon>Cypriniformes</taxon>
        <taxon>Gastromyzontidae</taxon>
        <taxon>Formosania</taxon>
    </lineage>
</organism>
<evidence type="ECO:0000250" key="1"/>
<evidence type="ECO:0000255" key="2"/>
<evidence type="ECO:0000305" key="3"/>
<sequence length="173" mass="18297">MTYLVSLLLMALIVGLIAVASNPAPYFAALGLVVAAGVGCGVLVSHGGSFLSLVLFLIYLGGMLVVFAYSAALAAEPFPEAWGDRSVVGYVMIYLLGVGLMVGVFWEGWYEGSWVVIDGLKEFSVLRGDTSGVAEMYSYGGGMLVICAWVLLLTLFVVLELTRGLSRGTIRAV</sequence>
<comment type="function">
    <text evidence="1">Core subunit of the mitochondrial membrane respiratory chain NADH dehydrogenase (Complex I) that is believed to belong to the minimal assembly required for catalysis. Complex I functions in the transfer of electrons from NADH to the respiratory chain. The immediate electron acceptor for the enzyme is believed to be ubiquinone (By similarity).</text>
</comment>
<comment type="catalytic activity">
    <reaction>
        <text>a ubiquinone + NADH + 5 H(+)(in) = a ubiquinol + NAD(+) + 4 H(+)(out)</text>
        <dbReference type="Rhea" id="RHEA:29091"/>
        <dbReference type="Rhea" id="RHEA-COMP:9565"/>
        <dbReference type="Rhea" id="RHEA-COMP:9566"/>
        <dbReference type="ChEBI" id="CHEBI:15378"/>
        <dbReference type="ChEBI" id="CHEBI:16389"/>
        <dbReference type="ChEBI" id="CHEBI:17976"/>
        <dbReference type="ChEBI" id="CHEBI:57540"/>
        <dbReference type="ChEBI" id="CHEBI:57945"/>
        <dbReference type="EC" id="7.1.1.2"/>
    </reaction>
</comment>
<comment type="subcellular location">
    <subcellularLocation>
        <location evidence="3">Mitochondrion membrane</location>
        <topology evidence="3">Multi-pass membrane protein</topology>
    </subcellularLocation>
</comment>
<comment type="similarity">
    <text evidence="3">Belongs to the complex I subunit 6 family.</text>
</comment>
<protein>
    <recommendedName>
        <fullName>NADH-ubiquinone oxidoreductase chain 6</fullName>
        <ecNumber>7.1.1.2</ecNumber>
    </recommendedName>
    <alternativeName>
        <fullName>NADH dehydrogenase subunit 6</fullName>
    </alternativeName>
</protein>
<geneLocation type="mitochondrion"/>
<proteinExistence type="inferred from homology"/>